<gene>
    <name evidence="1" type="primary">groES</name>
    <name evidence="1" type="synonym">groS</name>
    <name type="ordered locus">Tmel_0053</name>
</gene>
<sequence length="90" mass="9983">MKVRPLGARLLIKPIQEEKRTEGGIVLPDTAKEKPMKAEVVAVGNLEDSDVDIVVGDKVIFSKYSGTEIKIEDDDYIIIDVEDILAKIED</sequence>
<feature type="chain" id="PRO_1000025392" description="Co-chaperonin GroES">
    <location>
        <begin position="1"/>
        <end position="90"/>
    </location>
</feature>
<reference key="1">
    <citation type="submission" date="2007-05" db="EMBL/GenBank/DDBJ databases">
        <title>Complete sequence of Thermosipho melanesiensis BI429.</title>
        <authorList>
            <consortium name="US DOE Joint Genome Institute"/>
            <person name="Copeland A."/>
            <person name="Lucas S."/>
            <person name="Lapidus A."/>
            <person name="Barry K."/>
            <person name="Glavina del Rio T."/>
            <person name="Dalin E."/>
            <person name="Tice H."/>
            <person name="Pitluck S."/>
            <person name="Chertkov O."/>
            <person name="Brettin T."/>
            <person name="Bruce D."/>
            <person name="Detter J.C."/>
            <person name="Han C."/>
            <person name="Schmutz J."/>
            <person name="Larimer F."/>
            <person name="Land M."/>
            <person name="Hauser L."/>
            <person name="Kyrpides N."/>
            <person name="Mikhailova N."/>
            <person name="Nelson K."/>
            <person name="Gogarten J.P."/>
            <person name="Noll K."/>
            <person name="Richardson P."/>
        </authorList>
    </citation>
    <scope>NUCLEOTIDE SEQUENCE [LARGE SCALE GENOMIC DNA]</scope>
    <source>
        <strain>DSM 12029 / CIP 104789 / BI429</strain>
    </source>
</reference>
<protein>
    <recommendedName>
        <fullName evidence="1">Co-chaperonin GroES</fullName>
    </recommendedName>
    <alternativeName>
        <fullName evidence="1">10 kDa chaperonin</fullName>
    </alternativeName>
    <alternativeName>
        <fullName evidence="1">Chaperonin-10</fullName>
        <shortName evidence="1">Cpn10</shortName>
    </alternativeName>
</protein>
<evidence type="ECO:0000255" key="1">
    <source>
        <dbReference type="HAMAP-Rule" id="MF_00580"/>
    </source>
</evidence>
<name>CH10_THEM4</name>
<comment type="function">
    <text evidence="1">Together with the chaperonin GroEL, plays an essential role in assisting protein folding. The GroEL-GroES system forms a nano-cage that allows encapsulation of the non-native substrate proteins and provides a physical environment optimized to promote and accelerate protein folding. GroES binds to the apical surface of the GroEL ring, thereby capping the opening of the GroEL channel.</text>
</comment>
<comment type="subunit">
    <text evidence="1">Heptamer of 7 subunits arranged in a ring. Interacts with the chaperonin GroEL.</text>
</comment>
<comment type="subcellular location">
    <subcellularLocation>
        <location evidence="1">Cytoplasm</location>
    </subcellularLocation>
</comment>
<comment type="similarity">
    <text evidence="1">Belongs to the GroES chaperonin family.</text>
</comment>
<keyword id="KW-0143">Chaperone</keyword>
<keyword id="KW-0963">Cytoplasm</keyword>
<accession>A6LJ31</accession>
<organism>
    <name type="scientific">Thermosipho melanesiensis (strain DSM 12029 / CIP 104789 / BI429)</name>
    <dbReference type="NCBI Taxonomy" id="391009"/>
    <lineage>
        <taxon>Bacteria</taxon>
        <taxon>Thermotogati</taxon>
        <taxon>Thermotogota</taxon>
        <taxon>Thermotogae</taxon>
        <taxon>Thermotogales</taxon>
        <taxon>Fervidobacteriaceae</taxon>
        <taxon>Thermosipho</taxon>
    </lineage>
</organism>
<dbReference type="EMBL" id="CP000716">
    <property type="protein sequence ID" value="ABR29932.1"/>
    <property type="molecule type" value="Genomic_DNA"/>
</dbReference>
<dbReference type="RefSeq" id="WP_012056294.1">
    <property type="nucleotide sequence ID" value="NC_009616.1"/>
</dbReference>
<dbReference type="SMR" id="A6LJ31"/>
<dbReference type="STRING" id="391009.Tmel_0053"/>
<dbReference type="KEGG" id="tme:Tmel_0053"/>
<dbReference type="eggNOG" id="COG0234">
    <property type="taxonomic scope" value="Bacteria"/>
</dbReference>
<dbReference type="HOGENOM" id="CLU_132825_2_0_0"/>
<dbReference type="OrthoDB" id="9806791at2"/>
<dbReference type="Proteomes" id="UP000001110">
    <property type="component" value="Chromosome"/>
</dbReference>
<dbReference type="GO" id="GO:0005737">
    <property type="term" value="C:cytoplasm"/>
    <property type="evidence" value="ECO:0007669"/>
    <property type="project" value="UniProtKB-SubCell"/>
</dbReference>
<dbReference type="GO" id="GO:0005524">
    <property type="term" value="F:ATP binding"/>
    <property type="evidence" value="ECO:0007669"/>
    <property type="project" value="InterPro"/>
</dbReference>
<dbReference type="GO" id="GO:0046872">
    <property type="term" value="F:metal ion binding"/>
    <property type="evidence" value="ECO:0007669"/>
    <property type="project" value="TreeGrafter"/>
</dbReference>
<dbReference type="GO" id="GO:0044183">
    <property type="term" value="F:protein folding chaperone"/>
    <property type="evidence" value="ECO:0007669"/>
    <property type="project" value="InterPro"/>
</dbReference>
<dbReference type="GO" id="GO:0051087">
    <property type="term" value="F:protein-folding chaperone binding"/>
    <property type="evidence" value="ECO:0007669"/>
    <property type="project" value="TreeGrafter"/>
</dbReference>
<dbReference type="GO" id="GO:0051082">
    <property type="term" value="F:unfolded protein binding"/>
    <property type="evidence" value="ECO:0007669"/>
    <property type="project" value="TreeGrafter"/>
</dbReference>
<dbReference type="GO" id="GO:0051085">
    <property type="term" value="P:chaperone cofactor-dependent protein refolding"/>
    <property type="evidence" value="ECO:0007669"/>
    <property type="project" value="TreeGrafter"/>
</dbReference>
<dbReference type="CDD" id="cd00320">
    <property type="entry name" value="cpn10"/>
    <property type="match status" value="1"/>
</dbReference>
<dbReference type="FunFam" id="2.30.33.40:FF:000001">
    <property type="entry name" value="10 kDa chaperonin"/>
    <property type="match status" value="1"/>
</dbReference>
<dbReference type="Gene3D" id="2.30.33.40">
    <property type="entry name" value="GroES chaperonin"/>
    <property type="match status" value="1"/>
</dbReference>
<dbReference type="HAMAP" id="MF_00580">
    <property type="entry name" value="CH10"/>
    <property type="match status" value="1"/>
</dbReference>
<dbReference type="InterPro" id="IPR020818">
    <property type="entry name" value="Chaperonin_GroES"/>
</dbReference>
<dbReference type="InterPro" id="IPR037124">
    <property type="entry name" value="Chaperonin_GroES_sf"/>
</dbReference>
<dbReference type="InterPro" id="IPR011032">
    <property type="entry name" value="GroES-like_sf"/>
</dbReference>
<dbReference type="NCBIfam" id="NF001531">
    <property type="entry name" value="PRK00364.2-2"/>
    <property type="match status" value="1"/>
</dbReference>
<dbReference type="NCBIfam" id="NF011106">
    <property type="entry name" value="PRK14533.1"/>
    <property type="match status" value="1"/>
</dbReference>
<dbReference type="PANTHER" id="PTHR10772">
    <property type="entry name" value="10 KDA HEAT SHOCK PROTEIN"/>
    <property type="match status" value="1"/>
</dbReference>
<dbReference type="PANTHER" id="PTHR10772:SF63">
    <property type="entry name" value="20 KDA CHAPERONIN, CHLOROPLASTIC"/>
    <property type="match status" value="1"/>
</dbReference>
<dbReference type="Pfam" id="PF00166">
    <property type="entry name" value="Cpn10"/>
    <property type="match status" value="1"/>
</dbReference>
<dbReference type="PRINTS" id="PR00297">
    <property type="entry name" value="CHAPERONIN10"/>
</dbReference>
<dbReference type="SMART" id="SM00883">
    <property type="entry name" value="Cpn10"/>
    <property type="match status" value="1"/>
</dbReference>
<dbReference type="SUPFAM" id="SSF50129">
    <property type="entry name" value="GroES-like"/>
    <property type="match status" value="1"/>
</dbReference>
<proteinExistence type="inferred from homology"/>